<feature type="chain" id="PRO_0000230941" description="Glucose-6-phosphate isomerase">
    <location>
        <begin position="1"/>
        <end position="543"/>
    </location>
</feature>
<feature type="active site" description="Proton donor" evidence="1">
    <location>
        <position position="351"/>
    </location>
</feature>
<feature type="active site" evidence="1">
    <location>
        <position position="382"/>
    </location>
</feature>
<feature type="active site" evidence="1">
    <location>
        <position position="511"/>
    </location>
</feature>
<gene>
    <name evidence="1" type="primary">pgi</name>
    <name type="ordered locus">Tcr_0608</name>
</gene>
<keyword id="KW-0963">Cytoplasm</keyword>
<keyword id="KW-0312">Gluconeogenesis</keyword>
<keyword id="KW-0324">Glycolysis</keyword>
<keyword id="KW-0413">Isomerase</keyword>
<reference key="1">
    <citation type="journal article" date="2006" name="PLoS Biol.">
        <title>The genome of deep-sea vent chemolithoautotroph Thiomicrospira crunogena XCL-2.</title>
        <authorList>
            <person name="Scott K.M."/>
            <person name="Sievert S.M."/>
            <person name="Abril F.N."/>
            <person name="Ball L.A."/>
            <person name="Barrett C.J."/>
            <person name="Blake R.A."/>
            <person name="Boller A.J."/>
            <person name="Chain P.S.G."/>
            <person name="Clark J.A."/>
            <person name="Davis C.R."/>
            <person name="Detter C."/>
            <person name="Do K.F."/>
            <person name="Dobrinski K.P."/>
            <person name="Faza B.I."/>
            <person name="Fitzpatrick K.A."/>
            <person name="Freyermuth S.K."/>
            <person name="Harmer T.L."/>
            <person name="Hauser L.J."/>
            <person name="Huegler M."/>
            <person name="Kerfeld C.A."/>
            <person name="Klotz M.G."/>
            <person name="Kong W.W."/>
            <person name="Land M."/>
            <person name="Lapidus A."/>
            <person name="Larimer F.W."/>
            <person name="Longo D.L."/>
            <person name="Lucas S."/>
            <person name="Malfatti S.A."/>
            <person name="Massey S.E."/>
            <person name="Martin D.D."/>
            <person name="McCuddin Z."/>
            <person name="Meyer F."/>
            <person name="Moore J.L."/>
            <person name="Ocampo L.H. Jr."/>
            <person name="Paul J.H."/>
            <person name="Paulsen I.T."/>
            <person name="Reep D.K."/>
            <person name="Ren Q."/>
            <person name="Ross R.L."/>
            <person name="Sato P.Y."/>
            <person name="Thomas P."/>
            <person name="Tinkham L.E."/>
            <person name="Zeruth G.T."/>
        </authorList>
    </citation>
    <scope>NUCLEOTIDE SEQUENCE [LARGE SCALE GENOMIC DNA]</scope>
    <source>
        <strain>DSM 25203 / XCL-2</strain>
    </source>
</reference>
<evidence type="ECO:0000255" key="1">
    <source>
        <dbReference type="HAMAP-Rule" id="MF_00473"/>
    </source>
</evidence>
<organism>
    <name type="scientific">Hydrogenovibrio crunogenus (strain DSM 25203 / XCL-2)</name>
    <name type="common">Thiomicrospira crunogena</name>
    <dbReference type="NCBI Taxonomy" id="317025"/>
    <lineage>
        <taxon>Bacteria</taxon>
        <taxon>Pseudomonadati</taxon>
        <taxon>Pseudomonadota</taxon>
        <taxon>Gammaproteobacteria</taxon>
        <taxon>Thiotrichales</taxon>
        <taxon>Piscirickettsiaceae</taxon>
        <taxon>Hydrogenovibrio</taxon>
    </lineage>
</organism>
<name>G6PI_HYDCU</name>
<accession>Q31I19</accession>
<comment type="function">
    <text evidence="1">Catalyzes the reversible isomerization of glucose-6-phosphate to fructose-6-phosphate.</text>
</comment>
<comment type="catalytic activity">
    <reaction evidence="1">
        <text>alpha-D-glucose 6-phosphate = beta-D-fructose 6-phosphate</text>
        <dbReference type="Rhea" id="RHEA:11816"/>
        <dbReference type="ChEBI" id="CHEBI:57634"/>
        <dbReference type="ChEBI" id="CHEBI:58225"/>
        <dbReference type="EC" id="5.3.1.9"/>
    </reaction>
</comment>
<comment type="pathway">
    <text evidence="1">Carbohydrate biosynthesis; gluconeogenesis.</text>
</comment>
<comment type="pathway">
    <text evidence="1">Carbohydrate degradation; glycolysis; D-glyceraldehyde 3-phosphate and glycerone phosphate from D-glucose: step 2/4.</text>
</comment>
<comment type="subcellular location">
    <subcellularLocation>
        <location evidence="1">Cytoplasm</location>
    </subcellularLocation>
</comment>
<comment type="similarity">
    <text evidence="1">Belongs to the GPI family.</text>
</comment>
<dbReference type="EC" id="5.3.1.9" evidence="1"/>
<dbReference type="EMBL" id="CP000109">
    <property type="protein sequence ID" value="ABB41204.1"/>
    <property type="molecule type" value="Genomic_DNA"/>
</dbReference>
<dbReference type="SMR" id="Q31I19"/>
<dbReference type="STRING" id="317025.Tcr_0608"/>
<dbReference type="KEGG" id="tcx:Tcr_0608"/>
<dbReference type="eggNOG" id="COG0166">
    <property type="taxonomic scope" value="Bacteria"/>
</dbReference>
<dbReference type="HOGENOM" id="CLU_017947_3_1_6"/>
<dbReference type="OrthoDB" id="140919at2"/>
<dbReference type="UniPathway" id="UPA00109">
    <property type="reaction ID" value="UER00181"/>
</dbReference>
<dbReference type="UniPathway" id="UPA00138"/>
<dbReference type="GO" id="GO:0005829">
    <property type="term" value="C:cytosol"/>
    <property type="evidence" value="ECO:0007669"/>
    <property type="project" value="TreeGrafter"/>
</dbReference>
<dbReference type="GO" id="GO:0097367">
    <property type="term" value="F:carbohydrate derivative binding"/>
    <property type="evidence" value="ECO:0007669"/>
    <property type="project" value="InterPro"/>
</dbReference>
<dbReference type="GO" id="GO:0004347">
    <property type="term" value="F:glucose-6-phosphate isomerase activity"/>
    <property type="evidence" value="ECO:0007669"/>
    <property type="project" value="UniProtKB-UniRule"/>
</dbReference>
<dbReference type="GO" id="GO:0048029">
    <property type="term" value="F:monosaccharide binding"/>
    <property type="evidence" value="ECO:0007669"/>
    <property type="project" value="TreeGrafter"/>
</dbReference>
<dbReference type="GO" id="GO:0006094">
    <property type="term" value="P:gluconeogenesis"/>
    <property type="evidence" value="ECO:0007669"/>
    <property type="project" value="UniProtKB-UniRule"/>
</dbReference>
<dbReference type="GO" id="GO:0051156">
    <property type="term" value="P:glucose 6-phosphate metabolic process"/>
    <property type="evidence" value="ECO:0007669"/>
    <property type="project" value="TreeGrafter"/>
</dbReference>
<dbReference type="GO" id="GO:0006096">
    <property type="term" value="P:glycolytic process"/>
    <property type="evidence" value="ECO:0007669"/>
    <property type="project" value="UniProtKB-UniRule"/>
</dbReference>
<dbReference type="CDD" id="cd05015">
    <property type="entry name" value="SIS_PGI_1"/>
    <property type="match status" value="1"/>
</dbReference>
<dbReference type="CDD" id="cd05016">
    <property type="entry name" value="SIS_PGI_2"/>
    <property type="match status" value="1"/>
</dbReference>
<dbReference type="Gene3D" id="1.10.1390.10">
    <property type="match status" value="1"/>
</dbReference>
<dbReference type="Gene3D" id="3.40.50.10490">
    <property type="entry name" value="Glucose-6-phosphate isomerase like protein, domain 1"/>
    <property type="match status" value="2"/>
</dbReference>
<dbReference type="HAMAP" id="MF_00473">
    <property type="entry name" value="G6P_isomerase"/>
    <property type="match status" value="1"/>
</dbReference>
<dbReference type="InterPro" id="IPR001672">
    <property type="entry name" value="G6P_Isomerase"/>
</dbReference>
<dbReference type="InterPro" id="IPR023096">
    <property type="entry name" value="G6P_Isomerase_C"/>
</dbReference>
<dbReference type="InterPro" id="IPR018189">
    <property type="entry name" value="Phosphoglucose_isomerase_CS"/>
</dbReference>
<dbReference type="InterPro" id="IPR046348">
    <property type="entry name" value="SIS_dom_sf"/>
</dbReference>
<dbReference type="InterPro" id="IPR035476">
    <property type="entry name" value="SIS_PGI_1"/>
</dbReference>
<dbReference type="InterPro" id="IPR035482">
    <property type="entry name" value="SIS_PGI_2"/>
</dbReference>
<dbReference type="NCBIfam" id="NF001211">
    <property type="entry name" value="PRK00179.1"/>
    <property type="match status" value="1"/>
</dbReference>
<dbReference type="PANTHER" id="PTHR11469">
    <property type="entry name" value="GLUCOSE-6-PHOSPHATE ISOMERASE"/>
    <property type="match status" value="1"/>
</dbReference>
<dbReference type="PANTHER" id="PTHR11469:SF1">
    <property type="entry name" value="GLUCOSE-6-PHOSPHATE ISOMERASE"/>
    <property type="match status" value="1"/>
</dbReference>
<dbReference type="Pfam" id="PF00342">
    <property type="entry name" value="PGI"/>
    <property type="match status" value="1"/>
</dbReference>
<dbReference type="PRINTS" id="PR00662">
    <property type="entry name" value="G6PISOMERASE"/>
</dbReference>
<dbReference type="SUPFAM" id="SSF53697">
    <property type="entry name" value="SIS domain"/>
    <property type="match status" value="1"/>
</dbReference>
<dbReference type="PROSITE" id="PS00765">
    <property type="entry name" value="P_GLUCOSE_ISOMERASE_1"/>
    <property type="match status" value="1"/>
</dbReference>
<dbReference type="PROSITE" id="PS00174">
    <property type="entry name" value="P_GLUCOSE_ISOMERASE_2"/>
    <property type="match status" value="1"/>
</dbReference>
<dbReference type="PROSITE" id="PS51463">
    <property type="entry name" value="P_GLUCOSE_ISOMERASE_3"/>
    <property type="match status" value="1"/>
</dbReference>
<proteinExistence type="inferred from homology"/>
<protein>
    <recommendedName>
        <fullName evidence="1">Glucose-6-phosphate isomerase</fullName>
        <shortName evidence="1">GPI</shortName>
        <ecNumber evidence="1">5.3.1.9</ecNumber>
    </recommendedName>
    <alternativeName>
        <fullName evidence="1">Phosphoglucose isomerase</fullName>
        <shortName evidence="1">PGI</shortName>
    </alternativeName>
    <alternativeName>
        <fullName evidence="1">Phosphohexose isomerase</fullName>
        <shortName evidence="1">PHI</shortName>
    </alternativeName>
</protein>
<sequence length="543" mass="60909">MGVETSSAWQALQLHSDSGMGSIHLSKLFQDTNRQDDYSLELSDVYVDFSKNRITQETVQLLIELAEQQKLPKEIHRLMTGEHVNDTEDRPALHTALRALGKDVSGGAETVQPEIEQVLQKMELMTKKIRSGHWRGYSGKPITDVVNIGVGGSDLGPLMITHSLQTISSPINLHFISSIDGTQTSNLLRGLKQETTLFILASKSFTTIDTLSNAETAKDWLKECISDERVIFSQHFIGVSTKPDKMQEWGIPPENQLMFWDWVGGRYSLWSAIGFPIALKIGMDGFRELLQGAHEMDQHFATADLKKNIPVILALIDIWNINFLNIHDKAILPYDARLRYLPAYLEQLVMESNGKSVARSGESVPYKTCPVLWGEVGPNAQHAFYQLLHQGTQAVMCDFIAPVERDDFDANSHTERDESLRHQHELALANCFAQSRVLMLGDNAIPSDLKASFDSPFKHYPGNQPSNTILIKTISAKTLGMLVAMYEHKTYVESVIWEINPFDQWGVELGKLIAKETYNAIKDKPLADSFDSSTKGLIDRVVK</sequence>